<proteinExistence type="evidence at protein level"/>
<keyword id="KW-0002">3D-structure</keyword>
<keyword id="KW-0119">Carbohydrate metabolism</keyword>
<keyword id="KW-0136">Cellulose degradation</keyword>
<keyword id="KW-0903">Direct protein sequencing</keyword>
<keyword id="KW-0326">Glycosidase</keyword>
<keyword id="KW-0378">Hydrolase</keyword>
<keyword id="KW-0624">Polysaccharide degradation</keyword>
<keyword id="KW-0732">Signal</keyword>
<organism>
    <name type="scientific">Clostridium longisporum</name>
    <dbReference type="NCBI Taxonomy" id="1523"/>
    <lineage>
        <taxon>Bacteria</taxon>
        <taxon>Bacillati</taxon>
        <taxon>Bacillota</taxon>
        <taxon>Clostridia</taxon>
        <taxon>Eubacteriales</taxon>
        <taxon>Clostridiaceae</taxon>
        <taxon>Clostridium</taxon>
    </lineage>
</organism>
<protein>
    <recommendedName>
        <fullName>Endoglucanase A</fullName>
        <ecNumber>3.2.1.4</ecNumber>
    </recommendedName>
    <alternativeName>
        <fullName>Cellulase A</fullName>
    </alternativeName>
    <alternativeName>
        <fullName>Endo-1,4-beta-glucanase A</fullName>
    </alternativeName>
</protein>
<sequence length="517" mass="57660">MKRSLLKTCSIIAGATIIFSSLSISRNPLEVQAASMRSASEIVQEMGVGWNLGNTLDAKITNLSYNTSPISFETGWGNPVTTKAMIDKIKNAGFKTIRIPTTWGEHLDGNNKLNEEWVKRVKEVVDYCIADDLYVILNTHHEGNWVIPTYAKESSVTPKLKTLWTQISEAFKDYDDHLIFETLNEPRLEGTPYEWTGGTSESRDVVNKYNAAALESIRKTGGNNLSRAVMMPTYAASGSSTTMNDFKVPDDKNVIASVHAYSPYFFAMDTSSNSVNTWGSSYDKYSLDVELDSYLNTFKSKGVPVVIGEFGSINKNNTSSRAELAEYYVTAAQKRGIPCVWWDNNYAETNKGETFGLLNRSTLNWYFSDIKDALIRGYKNVHPEATEDDKPSTDVTNPDSGNTKPDSGNTNPGTETTTPTDNEKISITSKINDWGGAYQADFTLKNNTSSDINNWSFKIKKNDIVFTNYWDVKITEENGYYVVTPQAWKTTILANSSIVISIQGTGKVISNFEYKFD</sequence>
<name>GUNA_CLOLO</name>
<accession>P54937</accession>
<reference key="1">
    <citation type="journal article" date="1993" name="J. Gen. Microbiol.">
        <title>Cloning of an endo-(1--&gt;4)-beta-glucanase gene, celA, from the rumen bacterium Clostridium sp. ('C. longisporum') and characterization of its product, CelA, in Escherichia coli.</title>
        <authorList>
            <person name="Mittendorf V."/>
            <person name="Thomson J.A."/>
        </authorList>
    </citation>
    <scope>NUCLEOTIDE SEQUENCE [GENOMIC DNA]</scope>
    <scope>PARTIAL PROTEIN SEQUENCE</scope>
    <source>
        <strain>ATCC 49440 / B6405</strain>
    </source>
</reference>
<dbReference type="EC" id="3.2.1.4"/>
<dbReference type="EMBL" id="L02868">
    <property type="protein sequence ID" value="AAC37035.1"/>
    <property type="molecule type" value="Unassigned_DNA"/>
</dbReference>
<dbReference type="PIR" id="I40798">
    <property type="entry name" value="I40798"/>
</dbReference>
<dbReference type="PDB" id="6Q1I">
    <property type="method" value="X-ray"/>
    <property type="resolution" value="1.35 A"/>
    <property type="chains" value="A/B=27-382"/>
</dbReference>
<dbReference type="PDBsum" id="6Q1I"/>
<dbReference type="SMR" id="P54937"/>
<dbReference type="CAZy" id="CBM2">
    <property type="family name" value="Carbohydrate-Binding Module Family 2"/>
</dbReference>
<dbReference type="CAZy" id="GH5">
    <property type="family name" value="Glycoside Hydrolase Family 5"/>
</dbReference>
<dbReference type="GO" id="GO:0009986">
    <property type="term" value="C:cell surface"/>
    <property type="evidence" value="ECO:0007669"/>
    <property type="project" value="TreeGrafter"/>
</dbReference>
<dbReference type="GO" id="GO:0005576">
    <property type="term" value="C:extracellular region"/>
    <property type="evidence" value="ECO:0007669"/>
    <property type="project" value="TreeGrafter"/>
</dbReference>
<dbReference type="GO" id="GO:0008422">
    <property type="term" value="F:beta-glucosidase activity"/>
    <property type="evidence" value="ECO:0007669"/>
    <property type="project" value="TreeGrafter"/>
</dbReference>
<dbReference type="GO" id="GO:0008810">
    <property type="term" value="F:cellulase activity"/>
    <property type="evidence" value="ECO:0007669"/>
    <property type="project" value="UniProtKB-EC"/>
</dbReference>
<dbReference type="GO" id="GO:0030247">
    <property type="term" value="F:polysaccharide binding"/>
    <property type="evidence" value="ECO:0007669"/>
    <property type="project" value="InterPro"/>
</dbReference>
<dbReference type="GO" id="GO:0030245">
    <property type="term" value="P:cellulose catabolic process"/>
    <property type="evidence" value="ECO:0007669"/>
    <property type="project" value="UniProtKB-KW"/>
</dbReference>
<dbReference type="Gene3D" id="2.60.40.290">
    <property type="match status" value="1"/>
</dbReference>
<dbReference type="Gene3D" id="3.20.20.80">
    <property type="entry name" value="Glycosidases"/>
    <property type="match status" value="1"/>
</dbReference>
<dbReference type="InterPro" id="IPR001919">
    <property type="entry name" value="CBD2"/>
</dbReference>
<dbReference type="InterPro" id="IPR008965">
    <property type="entry name" value="CBM2/CBM3_carb-bd_dom_sf"/>
</dbReference>
<dbReference type="InterPro" id="IPR012291">
    <property type="entry name" value="CBM2_carb-bd_dom_sf"/>
</dbReference>
<dbReference type="InterPro" id="IPR001547">
    <property type="entry name" value="Glyco_hydro_5"/>
</dbReference>
<dbReference type="InterPro" id="IPR018087">
    <property type="entry name" value="Glyco_hydro_5_CS"/>
</dbReference>
<dbReference type="InterPro" id="IPR017853">
    <property type="entry name" value="Glycoside_hydrolase_SF"/>
</dbReference>
<dbReference type="InterPro" id="IPR050386">
    <property type="entry name" value="Glycosyl_hydrolase_5"/>
</dbReference>
<dbReference type="PANTHER" id="PTHR31297:SF17">
    <property type="entry name" value="ENDOGLUCANASE"/>
    <property type="match status" value="1"/>
</dbReference>
<dbReference type="PANTHER" id="PTHR31297">
    <property type="entry name" value="GLUCAN ENDO-1,6-BETA-GLUCOSIDASE B"/>
    <property type="match status" value="1"/>
</dbReference>
<dbReference type="Pfam" id="PF00553">
    <property type="entry name" value="CBM_2"/>
    <property type="match status" value="1"/>
</dbReference>
<dbReference type="Pfam" id="PF00150">
    <property type="entry name" value="Cellulase"/>
    <property type="match status" value="1"/>
</dbReference>
<dbReference type="SMART" id="SM00637">
    <property type="entry name" value="CBD_II"/>
    <property type="match status" value="1"/>
</dbReference>
<dbReference type="SUPFAM" id="SSF51445">
    <property type="entry name" value="(Trans)glycosidases"/>
    <property type="match status" value="1"/>
</dbReference>
<dbReference type="SUPFAM" id="SSF49384">
    <property type="entry name" value="Carbohydrate-binding domain"/>
    <property type="match status" value="1"/>
</dbReference>
<dbReference type="PROSITE" id="PS51173">
    <property type="entry name" value="CBM2"/>
    <property type="match status" value="1"/>
</dbReference>
<dbReference type="PROSITE" id="PS00659">
    <property type="entry name" value="GLYCOSYL_HYDROL_F5"/>
    <property type="match status" value="1"/>
</dbReference>
<feature type="signal peptide" evidence="2">
    <location>
        <begin position="1"/>
        <end position="25"/>
    </location>
</feature>
<feature type="chain" id="PRO_0000007849" description="Endoglucanase A">
    <location>
        <begin position="26"/>
        <end position="517"/>
    </location>
</feature>
<feature type="domain" description="CBM2" evidence="3">
    <location>
        <begin position="416"/>
        <end position="517"/>
    </location>
</feature>
<feature type="region of interest" description="Catalytic" evidence="1">
    <location>
        <begin position="26"/>
        <end status="unknown"/>
    </location>
</feature>
<feature type="region of interest" description="Disordered" evidence="4">
    <location>
        <begin position="382"/>
        <end position="424"/>
    </location>
</feature>
<feature type="compositionally biased region" description="Basic and acidic residues" evidence="4">
    <location>
        <begin position="382"/>
        <end position="392"/>
    </location>
</feature>
<feature type="compositionally biased region" description="Polar residues" evidence="4">
    <location>
        <begin position="393"/>
        <end position="407"/>
    </location>
</feature>
<feature type="compositionally biased region" description="Low complexity" evidence="4">
    <location>
        <begin position="408"/>
        <end position="420"/>
    </location>
</feature>
<feature type="active site" description="Proton donor" evidence="1">
    <location>
        <position position="185"/>
    </location>
</feature>
<feature type="active site" description="Nucleophile" evidence="1">
    <location>
        <position position="309"/>
    </location>
</feature>
<feature type="helix" evidence="6">
    <location>
        <begin position="39"/>
        <end position="45"/>
    </location>
</feature>
<feature type="strand" evidence="6">
    <location>
        <begin position="48"/>
        <end position="52"/>
    </location>
</feature>
<feature type="helix" evidence="6">
    <location>
        <begin position="69"/>
        <end position="73"/>
    </location>
</feature>
<feature type="turn" evidence="6">
    <location>
        <begin position="74"/>
        <end position="76"/>
    </location>
</feature>
<feature type="helix" evidence="6">
    <location>
        <begin position="83"/>
        <end position="92"/>
    </location>
</feature>
<feature type="strand" evidence="6">
    <location>
        <begin position="96"/>
        <end position="99"/>
    </location>
</feature>
<feature type="helix" evidence="6">
    <location>
        <begin position="104"/>
        <end position="106"/>
    </location>
</feature>
<feature type="helix" evidence="6">
    <location>
        <begin position="115"/>
        <end position="130"/>
    </location>
</feature>
<feature type="strand" evidence="6">
    <location>
        <begin position="134"/>
        <end position="138"/>
    </location>
</feature>
<feature type="turn" evidence="6">
    <location>
        <begin position="143"/>
        <end position="145"/>
    </location>
</feature>
<feature type="turn" evidence="6">
    <location>
        <begin position="150"/>
        <end position="152"/>
    </location>
</feature>
<feature type="helix" evidence="6">
    <location>
        <begin position="153"/>
        <end position="170"/>
    </location>
</feature>
<feature type="turn" evidence="6">
    <location>
        <begin position="171"/>
        <end position="173"/>
    </location>
</feature>
<feature type="strand" evidence="6">
    <location>
        <begin position="178"/>
        <end position="181"/>
    </location>
</feature>
<feature type="turn" evidence="6">
    <location>
        <begin position="192"/>
        <end position="197"/>
    </location>
</feature>
<feature type="helix" evidence="6">
    <location>
        <begin position="200"/>
        <end position="219"/>
    </location>
</feature>
<feature type="helix" evidence="6">
    <location>
        <begin position="222"/>
        <end position="225"/>
    </location>
</feature>
<feature type="strand" evidence="6">
    <location>
        <begin position="229"/>
        <end position="237"/>
    </location>
</feature>
<feature type="helix" evidence="6">
    <location>
        <begin position="240"/>
        <end position="244"/>
    </location>
</feature>
<feature type="strand" evidence="6">
    <location>
        <begin position="252"/>
        <end position="259"/>
    </location>
</feature>
<feature type="helix" evidence="6">
    <location>
        <begin position="264"/>
        <end position="267"/>
    </location>
</feature>
<feature type="helix" evidence="6">
    <location>
        <begin position="281"/>
        <end position="300"/>
    </location>
</feature>
<feature type="strand" evidence="6">
    <location>
        <begin position="305"/>
        <end position="310"/>
    </location>
</feature>
<feature type="helix" evidence="6">
    <location>
        <begin position="318"/>
        <end position="334"/>
    </location>
</feature>
<feature type="strand" evidence="6">
    <location>
        <begin position="339"/>
        <end position="343"/>
    </location>
</feature>
<feature type="turn" evidence="6">
    <location>
        <begin position="360"/>
        <end position="362"/>
    </location>
</feature>
<feature type="strand" evidence="6">
    <location>
        <begin position="363"/>
        <end position="366"/>
    </location>
</feature>
<feature type="helix" evidence="6">
    <location>
        <begin position="368"/>
        <end position="381"/>
    </location>
</feature>
<gene>
    <name type="primary">celA</name>
</gene>
<comment type="function">
    <text>Hydrolyzes barley beta-glucan, lichenan, carboxymethylcellulose and xylan. It shows preferential activity against the larger cellooligosaccharides (cellohexaose and cellopentaose); cellotetraose is the smallest substrate degraded completely.</text>
</comment>
<comment type="catalytic activity">
    <reaction>
        <text>Endohydrolysis of (1-&gt;4)-beta-D-glucosidic linkages in cellulose, lichenin and cereal beta-D-glucans.</text>
        <dbReference type="EC" id="3.2.1.4"/>
    </reaction>
</comment>
<comment type="biophysicochemical properties">
    <phDependence>
        <text>Optimum pH is 4.8.</text>
    </phDependence>
    <temperatureDependence>
        <text>Optimum temperature is 43 degrees Celsius.</text>
    </temperatureDependence>
</comment>
<comment type="similarity">
    <text evidence="5">Belongs to the glycosyl hydrolase 5 (cellulase A) family.</text>
</comment>
<evidence type="ECO:0000250" key="1"/>
<evidence type="ECO:0000255" key="2"/>
<evidence type="ECO:0000255" key="3">
    <source>
        <dbReference type="PROSITE-ProRule" id="PRU01135"/>
    </source>
</evidence>
<evidence type="ECO:0000256" key="4">
    <source>
        <dbReference type="SAM" id="MobiDB-lite"/>
    </source>
</evidence>
<evidence type="ECO:0000305" key="5"/>
<evidence type="ECO:0007829" key="6">
    <source>
        <dbReference type="PDB" id="6Q1I"/>
    </source>
</evidence>